<feature type="signal peptide" evidence="2">
    <location>
        <begin position="1"/>
        <end position="26"/>
    </location>
</feature>
<feature type="chain" id="PRO_0000030932" description="Ribonuclease pancreatic">
    <location>
        <begin position="27"/>
        <end position="156"/>
    </location>
</feature>
<feature type="active site" description="Proton acceptor" evidence="1">
    <location>
        <position position="38"/>
    </location>
</feature>
<feature type="active site" description="Proton donor" evidence="1">
    <location>
        <position position="147"/>
    </location>
</feature>
<feature type="binding site" evidence="1">
    <location>
        <position position="33"/>
    </location>
    <ligand>
        <name>substrate</name>
    </ligand>
</feature>
<feature type="binding site" evidence="1">
    <location>
        <position position="36"/>
    </location>
    <ligand>
        <name>substrate</name>
    </ligand>
</feature>
<feature type="binding site" evidence="1">
    <location>
        <begin position="69"/>
        <end position="73"/>
    </location>
    <ligand>
        <name>substrate</name>
    </ligand>
</feature>
<feature type="binding site" evidence="1">
    <location>
        <position position="94"/>
    </location>
    <ligand>
        <name>substrate</name>
    </ligand>
</feature>
<feature type="binding site" evidence="1">
    <location>
        <position position="113"/>
    </location>
    <ligand>
        <name>substrate</name>
    </ligand>
</feature>
<feature type="glycosylation site" description="N-linked (GlcNAc...) asparagine" evidence="2">
    <location>
        <position position="90"/>
    </location>
</feature>
<feature type="disulfide bond" evidence="1">
    <location>
        <begin position="54"/>
        <end position="112"/>
    </location>
</feature>
<feature type="disulfide bond" evidence="1">
    <location>
        <begin position="68"/>
        <end position="123"/>
    </location>
</feature>
<feature type="disulfide bond" evidence="1">
    <location>
        <begin position="86"/>
        <end position="138"/>
    </location>
</feature>
<feature type="disulfide bond" evidence="1">
    <location>
        <begin position="93"/>
        <end position="100"/>
    </location>
</feature>
<evidence type="ECO:0000250" key="1"/>
<evidence type="ECO:0000255" key="2"/>
<evidence type="ECO:0000305" key="3"/>
<accession>Q9WUS1</accession>
<keyword id="KW-1015">Disulfide bond</keyword>
<keyword id="KW-0255">Endonuclease</keyword>
<keyword id="KW-0325">Glycoprotein</keyword>
<keyword id="KW-0378">Hydrolase</keyword>
<keyword id="KW-0456">Lyase</keyword>
<keyword id="KW-0540">Nuclease</keyword>
<keyword id="KW-0964">Secreted</keyword>
<keyword id="KW-0732">Signal</keyword>
<sequence>MGLEKSLVFFPLLVLLALGWVQPCLGRESSAHKFRRQHMDSEGLSSSSSSPTYCNQMMQRRKLTRGHCKPVNTFVHEPLADVQAVCFQENVTCKNGQTNCYRSGSSMHVTDCRTTGSSKYPNCAYRTTQKVKRIVVACEGDPSVPVHYDGSVEDST</sequence>
<dbReference type="EC" id="4.6.1.18"/>
<dbReference type="EMBL" id="AJ005767">
    <property type="protein sequence ID" value="CAB41478.1"/>
    <property type="molecule type" value="Genomic_DNA"/>
</dbReference>
<dbReference type="SMR" id="Q9WUS1"/>
<dbReference type="GlyCosmos" id="Q9WUS1">
    <property type="glycosylation" value="1 site, No reported glycans"/>
</dbReference>
<dbReference type="GO" id="GO:0005576">
    <property type="term" value="C:extracellular region"/>
    <property type="evidence" value="ECO:0007669"/>
    <property type="project" value="UniProtKB-SubCell"/>
</dbReference>
<dbReference type="GO" id="GO:0016829">
    <property type="term" value="F:lyase activity"/>
    <property type="evidence" value="ECO:0007669"/>
    <property type="project" value="UniProtKB-KW"/>
</dbReference>
<dbReference type="GO" id="GO:0003676">
    <property type="term" value="F:nucleic acid binding"/>
    <property type="evidence" value="ECO:0007669"/>
    <property type="project" value="InterPro"/>
</dbReference>
<dbReference type="GO" id="GO:0004522">
    <property type="term" value="F:ribonuclease A activity"/>
    <property type="evidence" value="ECO:0007669"/>
    <property type="project" value="UniProtKB-EC"/>
</dbReference>
<dbReference type="GO" id="GO:0050830">
    <property type="term" value="P:defense response to Gram-positive bacterium"/>
    <property type="evidence" value="ECO:0007669"/>
    <property type="project" value="TreeGrafter"/>
</dbReference>
<dbReference type="CDD" id="cd06265">
    <property type="entry name" value="RNase_A_canonical"/>
    <property type="match status" value="1"/>
</dbReference>
<dbReference type="FunFam" id="3.10.130.10:FF:000001">
    <property type="entry name" value="Ribonuclease pancreatic"/>
    <property type="match status" value="1"/>
</dbReference>
<dbReference type="Gene3D" id="3.10.130.10">
    <property type="entry name" value="Ribonuclease A-like domain"/>
    <property type="match status" value="1"/>
</dbReference>
<dbReference type="InterPro" id="IPR001427">
    <property type="entry name" value="RNaseA"/>
</dbReference>
<dbReference type="InterPro" id="IPR036816">
    <property type="entry name" value="RNaseA-like_dom_sf"/>
</dbReference>
<dbReference type="InterPro" id="IPR023411">
    <property type="entry name" value="RNaseA_AS"/>
</dbReference>
<dbReference type="InterPro" id="IPR023412">
    <property type="entry name" value="RNaseA_domain"/>
</dbReference>
<dbReference type="PANTHER" id="PTHR11437">
    <property type="entry name" value="RIBONUCLEASE"/>
    <property type="match status" value="1"/>
</dbReference>
<dbReference type="PANTHER" id="PTHR11437:SF24">
    <property type="entry name" value="RIBONUCLEASE PANCREATIC"/>
    <property type="match status" value="1"/>
</dbReference>
<dbReference type="Pfam" id="PF00074">
    <property type="entry name" value="RnaseA"/>
    <property type="match status" value="1"/>
</dbReference>
<dbReference type="PRINTS" id="PR00794">
    <property type="entry name" value="RIBONUCLEASE"/>
</dbReference>
<dbReference type="SMART" id="SM00092">
    <property type="entry name" value="RNAse_Pc"/>
    <property type="match status" value="1"/>
</dbReference>
<dbReference type="SUPFAM" id="SSF54076">
    <property type="entry name" value="RNase A-like"/>
    <property type="match status" value="1"/>
</dbReference>
<dbReference type="PROSITE" id="PS00127">
    <property type="entry name" value="RNASE_PANCREATIC"/>
    <property type="match status" value="1"/>
</dbReference>
<protein>
    <recommendedName>
        <fullName>Ribonuclease pancreatic</fullName>
        <ecNumber>4.6.1.18</ecNumber>
    </recommendedName>
    <alternativeName>
        <fullName>RNase 1</fullName>
    </alternativeName>
    <alternativeName>
        <fullName>RNase A</fullName>
    </alternativeName>
</protein>
<name>RNAS1_GLIGL</name>
<comment type="function">
    <text evidence="1">Endonuclease that catalyzes the cleavage of RNA on the 3' side of pyrimidine nucleotides. Acts on single-stranded and double-stranded RNA (By similarity).</text>
</comment>
<comment type="catalytic activity">
    <reaction>
        <text>an [RNA] containing cytidine + H2O = an [RNA]-3'-cytidine-3'-phosphate + a 5'-hydroxy-ribonucleotide-3'-[RNA].</text>
        <dbReference type="EC" id="4.6.1.18"/>
    </reaction>
</comment>
<comment type="catalytic activity">
    <reaction>
        <text>an [RNA] containing uridine + H2O = an [RNA]-3'-uridine-3'-phosphate + a 5'-hydroxy-ribonucleotide-3'-[RNA].</text>
        <dbReference type="EC" id="4.6.1.18"/>
    </reaction>
</comment>
<comment type="subunit">
    <text evidence="1">Monomer. Interacts with and forms tight 1:1 complexes with RNH1. Dimerization of two such complexes may occur. Interaction with RNH1 inhibits this protein (By similarity).</text>
</comment>
<comment type="subcellular location">
    <subcellularLocation>
        <location>Secreted</location>
    </subcellularLocation>
</comment>
<comment type="tissue specificity">
    <text>Pancreas.</text>
</comment>
<comment type="similarity">
    <text evidence="3">Belongs to the pancreatic ribonuclease family.</text>
</comment>
<reference key="1">
    <citation type="journal article" date="1999" name="Mol. Phylogenet. Evol.">
        <title>The phylogenetic position of 'Acomyinae' (Rodentia, Mammalia) as sister group of a Murinae + Gerbillinae clade: evidence from the nuclear ribonuclease gene.</title>
        <authorList>
            <person name="Dubois J.-Y.F."/>
            <person name="Catzeflis F.M."/>
            <person name="Beintema J.J."/>
        </authorList>
    </citation>
    <scope>NUCLEOTIDE SEQUENCE [GENOMIC DNA]</scope>
</reference>
<proteinExistence type="evidence at transcript level"/>
<organism>
    <name type="scientific">Glis glis</name>
    <name type="common">Fat dormouse</name>
    <name type="synonym">Myoxus glis</name>
    <dbReference type="NCBI Taxonomy" id="41261"/>
    <lineage>
        <taxon>Eukaryota</taxon>
        <taxon>Metazoa</taxon>
        <taxon>Chordata</taxon>
        <taxon>Craniata</taxon>
        <taxon>Vertebrata</taxon>
        <taxon>Euteleostomi</taxon>
        <taxon>Mammalia</taxon>
        <taxon>Eutheria</taxon>
        <taxon>Euarchontoglires</taxon>
        <taxon>Glires</taxon>
        <taxon>Rodentia</taxon>
        <taxon>Sciuromorpha</taxon>
        <taxon>Gliridae</taxon>
        <taxon>Glirinae</taxon>
        <taxon>Glis</taxon>
    </lineage>
</organism>
<gene>
    <name type="primary">RNASE1</name>
</gene>